<comment type="function">
    <text evidence="1">Produces ATP from ADP in the presence of a proton gradient across the membrane. The alpha chain is a regulatory subunit.</text>
</comment>
<comment type="catalytic activity">
    <reaction evidence="1">
        <text>ATP + H2O + 4 H(+)(in) = ADP + phosphate + 5 H(+)(out)</text>
        <dbReference type="Rhea" id="RHEA:57720"/>
        <dbReference type="ChEBI" id="CHEBI:15377"/>
        <dbReference type="ChEBI" id="CHEBI:15378"/>
        <dbReference type="ChEBI" id="CHEBI:30616"/>
        <dbReference type="ChEBI" id="CHEBI:43474"/>
        <dbReference type="ChEBI" id="CHEBI:456216"/>
        <dbReference type="EC" id="7.1.2.2"/>
    </reaction>
</comment>
<comment type="subunit">
    <text evidence="1">F-type ATPases have 2 components, CF(1) - the catalytic core - and CF(0) - the membrane proton channel. CF(1) has five subunits: alpha(3), beta(3), gamma(1), delta(1), epsilon(1). CF(0) has three main subunits: a(1), b(2) and c(9-12). The alpha and beta chains form an alternating ring which encloses part of the gamma chain. CF(1) is attached to CF(0) by a central stalk formed by the gamma and epsilon chains, while a peripheral stalk is formed by the delta and b chains.</text>
</comment>
<comment type="subcellular location">
    <subcellularLocation>
        <location evidence="1">Cell inner membrane</location>
        <topology evidence="1">Peripheral membrane protein</topology>
    </subcellularLocation>
</comment>
<comment type="similarity">
    <text evidence="1">Belongs to the ATPase alpha/beta chains family.</text>
</comment>
<accession>Q5ZWN7</accession>
<name>ATPA1_LEGPH</name>
<evidence type="ECO:0000255" key="1">
    <source>
        <dbReference type="HAMAP-Rule" id="MF_01346"/>
    </source>
</evidence>
<protein>
    <recommendedName>
        <fullName evidence="1">ATP synthase subunit alpha 1</fullName>
        <ecNumber evidence="1">7.1.2.2</ecNumber>
    </recommendedName>
    <alternativeName>
        <fullName evidence="1">ATP synthase F1 sector subunit alpha 1</fullName>
    </alternativeName>
    <alternativeName>
        <fullName evidence="1">F-ATPase subunit alpha 1</fullName>
    </alternativeName>
</protein>
<reference key="1">
    <citation type="journal article" date="2004" name="Science">
        <title>The genomic sequence of the accidental pathogen Legionella pneumophila.</title>
        <authorList>
            <person name="Chien M."/>
            <person name="Morozova I."/>
            <person name="Shi S."/>
            <person name="Sheng H."/>
            <person name="Chen J."/>
            <person name="Gomez S.M."/>
            <person name="Asamani G."/>
            <person name="Hill K."/>
            <person name="Nuara J."/>
            <person name="Feder M."/>
            <person name="Rineer J."/>
            <person name="Greenberg J.J."/>
            <person name="Steshenko V."/>
            <person name="Park S.H."/>
            <person name="Zhao B."/>
            <person name="Teplitskaya E."/>
            <person name="Edwards J.R."/>
            <person name="Pampou S."/>
            <person name="Georghiou A."/>
            <person name="Chou I.-C."/>
            <person name="Iannuccilli W."/>
            <person name="Ulz M.E."/>
            <person name="Kim D.H."/>
            <person name="Geringer-Sameth A."/>
            <person name="Goldsberry C."/>
            <person name="Morozov P."/>
            <person name="Fischer S.G."/>
            <person name="Segal G."/>
            <person name="Qu X."/>
            <person name="Rzhetsky A."/>
            <person name="Zhang P."/>
            <person name="Cayanis E."/>
            <person name="De Jong P.J."/>
            <person name="Ju J."/>
            <person name="Kalachikov S."/>
            <person name="Shuman H.A."/>
            <person name="Russo J.J."/>
        </authorList>
    </citation>
    <scope>NUCLEOTIDE SEQUENCE [LARGE SCALE GENOMIC DNA]</scope>
    <source>
        <strain>Philadelphia 1 / ATCC 33152 / DSM 7513</strain>
    </source>
</reference>
<dbReference type="EC" id="7.1.2.2" evidence="1"/>
<dbReference type="EMBL" id="AE017354">
    <property type="protein sequence ID" value="AAU27134.1"/>
    <property type="molecule type" value="Genomic_DNA"/>
</dbReference>
<dbReference type="RefSeq" id="WP_010946783.1">
    <property type="nucleotide sequence ID" value="NC_002942.5"/>
</dbReference>
<dbReference type="RefSeq" id="YP_095081.1">
    <property type="nucleotide sequence ID" value="NC_002942.5"/>
</dbReference>
<dbReference type="SMR" id="Q5ZWN7"/>
<dbReference type="STRING" id="272624.lpg1048"/>
<dbReference type="PaxDb" id="272624-lpg1048"/>
<dbReference type="KEGG" id="lpn:lpg1048"/>
<dbReference type="PATRIC" id="fig|272624.6.peg.1088"/>
<dbReference type="eggNOG" id="COG0056">
    <property type="taxonomic scope" value="Bacteria"/>
</dbReference>
<dbReference type="HOGENOM" id="CLU_010091_2_1_6"/>
<dbReference type="OrthoDB" id="9803053at2"/>
<dbReference type="Proteomes" id="UP000000609">
    <property type="component" value="Chromosome"/>
</dbReference>
<dbReference type="GO" id="GO:0005886">
    <property type="term" value="C:plasma membrane"/>
    <property type="evidence" value="ECO:0007669"/>
    <property type="project" value="UniProtKB-SubCell"/>
</dbReference>
<dbReference type="GO" id="GO:0045259">
    <property type="term" value="C:proton-transporting ATP synthase complex"/>
    <property type="evidence" value="ECO:0007669"/>
    <property type="project" value="UniProtKB-KW"/>
</dbReference>
<dbReference type="GO" id="GO:0043531">
    <property type="term" value="F:ADP binding"/>
    <property type="evidence" value="ECO:0007669"/>
    <property type="project" value="TreeGrafter"/>
</dbReference>
<dbReference type="GO" id="GO:0005524">
    <property type="term" value="F:ATP binding"/>
    <property type="evidence" value="ECO:0007669"/>
    <property type="project" value="UniProtKB-UniRule"/>
</dbReference>
<dbReference type="GO" id="GO:0046933">
    <property type="term" value="F:proton-transporting ATP synthase activity, rotational mechanism"/>
    <property type="evidence" value="ECO:0007669"/>
    <property type="project" value="UniProtKB-UniRule"/>
</dbReference>
<dbReference type="CDD" id="cd18113">
    <property type="entry name" value="ATP-synt_F1_alpha_C"/>
    <property type="match status" value="1"/>
</dbReference>
<dbReference type="CDD" id="cd18116">
    <property type="entry name" value="ATP-synt_F1_alpha_N"/>
    <property type="match status" value="1"/>
</dbReference>
<dbReference type="CDD" id="cd01132">
    <property type="entry name" value="F1-ATPase_alpha_CD"/>
    <property type="match status" value="1"/>
</dbReference>
<dbReference type="FunFam" id="3.40.50.300:FF:002432">
    <property type="entry name" value="ATP synthase subunit alpha, mitochondrial"/>
    <property type="match status" value="1"/>
</dbReference>
<dbReference type="Gene3D" id="2.40.30.20">
    <property type="match status" value="1"/>
</dbReference>
<dbReference type="Gene3D" id="1.20.150.20">
    <property type="entry name" value="ATP synthase alpha/beta chain, C-terminal domain"/>
    <property type="match status" value="1"/>
</dbReference>
<dbReference type="Gene3D" id="3.40.50.300">
    <property type="entry name" value="P-loop containing nucleotide triphosphate hydrolases"/>
    <property type="match status" value="1"/>
</dbReference>
<dbReference type="HAMAP" id="MF_01346">
    <property type="entry name" value="ATP_synth_alpha_bact"/>
    <property type="match status" value="1"/>
</dbReference>
<dbReference type="InterPro" id="IPR023366">
    <property type="entry name" value="ATP_synth_asu-like_sf"/>
</dbReference>
<dbReference type="InterPro" id="IPR000793">
    <property type="entry name" value="ATP_synth_asu_C"/>
</dbReference>
<dbReference type="InterPro" id="IPR038376">
    <property type="entry name" value="ATP_synth_asu_C_sf"/>
</dbReference>
<dbReference type="InterPro" id="IPR033732">
    <property type="entry name" value="ATP_synth_F1_a_nt-bd_dom"/>
</dbReference>
<dbReference type="InterPro" id="IPR005294">
    <property type="entry name" value="ATP_synth_F1_asu"/>
</dbReference>
<dbReference type="InterPro" id="IPR020003">
    <property type="entry name" value="ATPase_a/bsu_AS"/>
</dbReference>
<dbReference type="InterPro" id="IPR036121">
    <property type="entry name" value="ATPase_F1/V1/A1_a/bsu_N_sf"/>
</dbReference>
<dbReference type="InterPro" id="IPR000194">
    <property type="entry name" value="ATPase_F1/V1/A1_a/bsu_nucl-bd"/>
</dbReference>
<dbReference type="InterPro" id="IPR027417">
    <property type="entry name" value="P-loop_NTPase"/>
</dbReference>
<dbReference type="NCBIfam" id="TIGR00962">
    <property type="entry name" value="atpA"/>
    <property type="match status" value="1"/>
</dbReference>
<dbReference type="NCBIfam" id="NF009884">
    <property type="entry name" value="PRK13343.1"/>
    <property type="match status" value="1"/>
</dbReference>
<dbReference type="PANTHER" id="PTHR48082">
    <property type="entry name" value="ATP SYNTHASE SUBUNIT ALPHA, MITOCHONDRIAL"/>
    <property type="match status" value="1"/>
</dbReference>
<dbReference type="PANTHER" id="PTHR48082:SF2">
    <property type="entry name" value="ATP SYNTHASE SUBUNIT ALPHA, MITOCHONDRIAL"/>
    <property type="match status" value="1"/>
</dbReference>
<dbReference type="Pfam" id="PF00006">
    <property type="entry name" value="ATP-synt_ab"/>
    <property type="match status" value="1"/>
</dbReference>
<dbReference type="Pfam" id="PF00306">
    <property type="entry name" value="ATP-synt_ab_C"/>
    <property type="match status" value="1"/>
</dbReference>
<dbReference type="SUPFAM" id="SSF47917">
    <property type="entry name" value="C-terminal domain of alpha and beta subunits of F1 ATP synthase"/>
    <property type="match status" value="1"/>
</dbReference>
<dbReference type="SUPFAM" id="SSF50615">
    <property type="entry name" value="N-terminal domain of alpha and beta subunits of F1 ATP synthase"/>
    <property type="match status" value="1"/>
</dbReference>
<dbReference type="SUPFAM" id="SSF52540">
    <property type="entry name" value="P-loop containing nucleoside triphosphate hydrolases"/>
    <property type="match status" value="1"/>
</dbReference>
<dbReference type="PROSITE" id="PS00152">
    <property type="entry name" value="ATPASE_ALPHA_BETA"/>
    <property type="match status" value="1"/>
</dbReference>
<organism>
    <name type="scientific">Legionella pneumophila subsp. pneumophila (strain Philadelphia 1 / ATCC 33152 / DSM 7513)</name>
    <dbReference type="NCBI Taxonomy" id="272624"/>
    <lineage>
        <taxon>Bacteria</taxon>
        <taxon>Pseudomonadati</taxon>
        <taxon>Pseudomonadota</taxon>
        <taxon>Gammaproteobacteria</taxon>
        <taxon>Legionellales</taxon>
        <taxon>Legionellaceae</taxon>
        <taxon>Legionella</taxon>
    </lineage>
</organism>
<feature type="chain" id="PRO_0000238272" description="ATP synthase subunit alpha 1">
    <location>
        <begin position="1"/>
        <end position="490"/>
    </location>
</feature>
<feature type="site" description="Required for activity" evidence="1">
    <location>
        <position position="364"/>
    </location>
</feature>
<sequence length="490" mass="54851">MNWSNTPSFLEKQRQRLERYQFQIKVSEQGRVVSVGDGIIWIKGLPGAAIDEILISEDECCIAMVFHLTEELVGAVMLVQTKKLKAGTPIFPLKRVLSIPVGDKLLGRVIDPLGHPLDGGEIPPHEEQGLLDRLSPPILHRDFVNRPLYTGNKMLDNLIPIGKGQRELLIGDNGLGKSALALDIVMNQKDKKVYCVYVLIGQKRSTVSSTIQLLKEANALDYTTVVVAQATALPGLLYLAPFAGCAIAEHWMKKGLDALVIYDDLSAHANSYRELSLLLRRPPGREAFPADIFYLHSRLLERSTCLSPALGGGSMTALPIIETKEGEMATYIPTNLISITDGQIFFDESLFSSGFLPAIDITKSVSRVGGKAQHPQIKKESGRMKLDYLQFLDLELFTRFGAKLDAKMQKQIQKGRVLREILKQERFSPLPIEFQLAWLIAYNEGFFDELNLEDIPKMLKKIEEEIKQSTLSLGSPREQWKKAIKEWLMA</sequence>
<proteinExistence type="inferred from homology"/>
<gene>
    <name evidence="1" type="primary">atpA1</name>
    <name type="ordered locus">lpg1048</name>
</gene>
<keyword id="KW-0066">ATP synthesis</keyword>
<keyword id="KW-0067">ATP-binding</keyword>
<keyword id="KW-0997">Cell inner membrane</keyword>
<keyword id="KW-1003">Cell membrane</keyword>
<keyword id="KW-0139">CF(1)</keyword>
<keyword id="KW-0375">Hydrogen ion transport</keyword>
<keyword id="KW-0406">Ion transport</keyword>
<keyword id="KW-0472">Membrane</keyword>
<keyword id="KW-0547">Nucleotide-binding</keyword>
<keyword id="KW-1185">Reference proteome</keyword>
<keyword id="KW-1278">Translocase</keyword>
<keyword id="KW-0813">Transport</keyword>